<comment type="function">
    <text evidence="1">Catalyzes the transfer of the gamma-phospho group of ATP to thymidine to generate dTMP in the salvage pathway of pyrimidine synthesis. The dTMP serves as a substrate for DNA polymerase during viral DNA replication. Allows the virus to be reactivated and to grow in non-proliferative cells lacking a high concentration of phosphorylated nucleic acid precursors.</text>
</comment>
<comment type="catalytic activity">
    <reaction evidence="1">
        <text>thymidine + ATP = dTMP + ADP + H(+)</text>
        <dbReference type="Rhea" id="RHEA:19129"/>
        <dbReference type="ChEBI" id="CHEBI:15378"/>
        <dbReference type="ChEBI" id="CHEBI:17748"/>
        <dbReference type="ChEBI" id="CHEBI:30616"/>
        <dbReference type="ChEBI" id="CHEBI:63528"/>
        <dbReference type="ChEBI" id="CHEBI:456216"/>
        <dbReference type="EC" id="2.7.1.21"/>
    </reaction>
</comment>
<comment type="subunit">
    <text evidence="1">Homodimer.</text>
</comment>
<comment type="similarity">
    <text evidence="1">Belongs to the herpesviridae thymidine kinase family.</text>
</comment>
<reference key="1">
    <citation type="journal article" date="1989" name="J. Gen. Virol.">
        <title>Location and characterization of the bovine herpesvirus type 2 thymidine kinase gene.</title>
        <authorList>
            <person name="Sheppard M."/>
            <person name="May J.T."/>
        </authorList>
    </citation>
    <scope>NUCLEOTIDE SEQUENCE [GENOMIC DNA]</scope>
</reference>
<reference key="2">
    <citation type="submission" date="2001-10" db="EMBL/GenBank/DDBJ databases">
        <authorList>
            <person name="Sheppard M."/>
            <person name="May J.T."/>
        </authorList>
    </citation>
    <scope>SEQUENCE REVISION TO C-TERMINUS</scope>
</reference>
<dbReference type="EC" id="2.7.1.21" evidence="1"/>
<dbReference type="EMBL" id="D00537">
    <property type="protein sequence ID" value="BAA00425.2"/>
    <property type="molecule type" value="Genomic_DNA"/>
</dbReference>
<dbReference type="PIR" id="JT0532">
    <property type="entry name" value="KIBEB2"/>
</dbReference>
<dbReference type="SMR" id="P22649"/>
<dbReference type="GO" id="GO:0005524">
    <property type="term" value="F:ATP binding"/>
    <property type="evidence" value="ECO:0007669"/>
    <property type="project" value="UniProtKB-KW"/>
</dbReference>
<dbReference type="GO" id="GO:0004797">
    <property type="term" value="F:thymidine kinase activity"/>
    <property type="evidence" value="ECO:0007669"/>
    <property type="project" value="UniProtKB-EC"/>
</dbReference>
<dbReference type="GO" id="GO:0071897">
    <property type="term" value="P:DNA biosynthetic process"/>
    <property type="evidence" value="ECO:0007669"/>
    <property type="project" value="UniProtKB-KW"/>
</dbReference>
<dbReference type="GO" id="GO:0006230">
    <property type="term" value="P:TMP biosynthetic process"/>
    <property type="evidence" value="ECO:0007669"/>
    <property type="project" value="InterPro"/>
</dbReference>
<dbReference type="Gene3D" id="3.40.50.300">
    <property type="entry name" value="P-loop containing nucleotide triphosphate hydrolases"/>
    <property type="match status" value="1"/>
</dbReference>
<dbReference type="HAMAP" id="MF_04029">
    <property type="entry name" value="HSV_KITH"/>
    <property type="match status" value="1"/>
</dbReference>
<dbReference type="InterPro" id="IPR001889">
    <property type="entry name" value="Herpes_TK"/>
</dbReference>
<dbReference type="InterPro" id="IPR027417">
    <property type="entry name" value="P-loop_NTPase"/>
</dbReference>
<dbReference type="Pfam" id="PF00693">
    <property type="entry name" value="Herpes_TK"/>
    <property type="match status" value="1"/>
</dbReference>
<dbReference type="SUPFAM" id="SSF52540">
    <property type="entry name" value="P-loop containing nucleoside triphosphate hydrolases"/>
    <property type="match status" value="1"/>
</dbReference>
<gene>
    <name evidence="1" type="primary">TK</name>
</gene>
<name>KITH_BHV2H</name>
<sequence>MSRLLRVYVDGPHGLGKTTAASALASERGDAIYLPEPMSYWSGAGEDDLVARVYTAQHRMDRGEIDAREAAGVVLGAQLTMSTPYVALNGLIAPHIGEEPSPGNATPPDLILIFDRHPIASLLCYPLARYLTRCLPIESVLSLIALIPPTPPGTNLILGTAPAEDHLSRLVARGRPGELPDARMLRAIRYVYALLANTVKYLQSGGSWRADLGSEPPRLPLAPPEIGDPNNPGGHNTLLALIHGAGATRGCAAMTSWTLDLLADRLRSMNMFTVDYSAPPEACVAQMRNLLPSMQCTVTPKPESHRAVADAALAFMREMSNCK</sequence>
<proteinExistence type="inferred from homology"/>
<accession>P22649</accession>
<feature type="chain" id="PRO_0000175063" description="Thymidine kinase">
    <location>
        <begin position="1"/>
        <end position="323"/>
    </location>
</feature>
<feature type="active site" description="Proton acceptor" evidence="1">
    <location>
        <position position="36"/>
    </location>
</feature>
<feature type="binding site" evidence="1">
    <location>
        <begin position="11"/>
        <end position="18"/>
    </location>
    <ligand>
        <name>ATP</name>
        <dbReference type="ChEBI" id="CHEBI:30616"/>
    </ligand>
</feature>
<feature type="binding site" evidence="1">
    <location>
        <position position="54"/>
    </location>
    <ligand>
        <name>substrate</name>
    </ligand>
</feature>
<feature type="binding site" evidence="1">
    <location>
        <position position="78"/>
    </location>
    <ligand>
        <name>substrate</name>
    </ligand>
</feature>
<feature type="binding site" evidence="1">
    <location>
        <position position="169"/>
    </location>
    <ligand>
        <name>ATP</name>
        <dbReference type="ChEBI" id="CHEBI:30616"/>
    </ligand>
</feature>
<feature type="binding site" evidence="1">
    <location>
        <position position="175"/>
    </location>
    <ligand>
        <name>substrate</name>
    </ligand>
</feature>
<protein>
    <recommendedName>
        <fullName evidence="1">Thymidine kinase</fullName>
        <ecNumber evidence="1">2.7.1.21</ecNumber>
    </recommendedName>
</protein>
<evidence type="ECO:0000255" key="1">
    <source>
        <dbReference type="HAMAP-Rule" id="MF_04029"/>
    </source>
</evidence>
<organismHost>
    <name type="scientific">Bos taurus</name>
    <name type="common">Bovine</name>
    <dbReference type="NCBI Taxonomy" id="9913"/>
</organismHost>
<organism>
    <name type="scientific">Bovine herpesvirus 2 (strain BHM-1)</name>
    <name type="common">BoHV-2</name>
    <name type="synonym">Bovine mammillitis virus</name>
    <dbReference type="NCBI Taxonomy" id="10297"/>
    <lineage>
        <taxon>Viruses</taxon>
        <taxon>Duplodnaviria</taxon>
        <taxon>Heunggongvirae</taxon>
        <taxon>Peploviricota</taxon>
        <taxon>Herviviricetes</taxon>
        <taxon>Herpesvirales</taxon>
        <taxon>Orthoherpesviridae</taxon>
        <taxon>Alphaherpesvirinae</taxon>
        <taxon>Simplexvirus</taxon>
        <taxon>Simplexvirus bovinealpha2</taxon>
    </lineage>
</organism>
<keyword id="KW-0067">ATP-binding</keyword>
<keyword id="KW-0237">DNA synthesis</keyword>
<keyword id="KW-0244">Early protein</keyword>
<keyword id="KW-0418">Kinase</keyword>
<keyword id="KW-0547">Nucleotide-binding</keyword>
<keyword id="KW-0808">Transferase</keyword>